<sequence length="315" mass="35702">MQCNDVQATEPDIKVSLTRVGVTNLKKLVKLKRTNKRDIVLLPTFEVFVDLPSSQKGIHMSRSPEVIEEVVENILLEKEIYGVEDLSVEIVMKLFEKHEYATRAEVMLYSDYMMEETSPVTQKDSQEIAKIMARAYGVKDDCGKIHVKKMVGAEVVGITACPCAQNMLKENAVTSLKEKGFSSEDIEKILDSVTIATHNQRGIGTVMIEVPSGYTVGISKIIKIIKDSMSGEVYELLKRSDEAYVVEMAHKNPKFVEDCAREMIKRVVDVFDYLPEDTQVLVRQVNKESIHRHDAFAERNSTIRELRDELKTLTN</sequence>
<name>MPTA_METM7</name>
<accession>A6VI22</accession>
<dbReference type="EC" id="3.5.4.39" evidence="1"/>
<dbReference type="EMBL" id="CP000745">
    <property type="protein sequence ID" value="ABR66098.1"/>
    <property type="molecule type" value="Genomic_DNA"/>
</dbReference>
<dbReference type="SMR" id="A6VI22"/>
<dbReference type="STRING" id="426368.MmarC7_1031"/>
<dbReference type="KEGG" id="mmz:MmarC7_1031"/>
<dbReference type="eggNOG" id="arCOG04301">
    <property type="taxonomic scope" value="Archaea"/>
</dbReference>
<dbReference type="HOGENOM" id="CLU_062816_1_0_2"/>
<dbReference type="OrthoDB" id="53087at2157"/>
<dbReference type="UniPathway" id="UPA00065"/>
<dbReference type="GO" id="GO:0003934">
    <property type="term" value="F:GTP cyclohydrolase I activity"/>
    <property type="evidence" value="ECO:0007669"/>
    <property type="project" value="InterPro"/>
</dbReference>
<dbReference type="GO" id="GO:0044682">
    <property type="term" value="F:GTP cyclohydrolase IV activity"/>
    <property type="evidence" value="ECO:0007669"/>
    <property type="project" value="UniProtKB-UniRule"/>
</dbReference>
<dbReference type="GO" id="GO:0005506">
    <property type="term" value="F:iron ion binding"/>
    <property type="evidence" value="ECO:0007669"/>
    <property type="project" value="UniProtKB-UniRule"/>
</dbReference>
<dbReference type="GO" id="GO:2001118">
    <property type="term" value="P:tetrahydromethanopterin biosynthetic process"/>
    <property type="evidence" value="ECO:0007669"/>
    <property type="project" value="UniProtKB-UniRule"/>
</dbReference>
<dbReference type="Gene3D" id="3.10.270.10">
    <property type="entry name" value="Urate Oxidase"/>
    <property type="match status" value="1"/>
</dbReference>
<dbReference type="HAMAP" id="MF_01527_A">
    <property type="entry name" value="GTP_cyclohydrol_A"/>
    <property type="match status" value="1"/>
</dbReference>
<dbReference type="InterPro" id="IPR003801">
    <property type="entry name" value="GTP_cyclohydrolase_FolE2/MptA"/>
</dbReference>
<dbReference type="InterPro" id="IPR022840">
    <property type="entry name" value="GTP_cyclohydrolase_MptA"/>
</dbReference>
<dbReference type="NCBIfam" id="TIGR00294">
    <property type="entry name" value="GTP cyclohydrolase MptA"/>
    <property type="match status" value="1"/>
</dbReference>
<dbReference type="PANTHER" id="PTHR36445">
    <property type="entry name" value="GTP CYCLOHYDROLASE MPTA"/>
    <property type="match status" value="1"/>
</dbReference>
<dbReference type="PANTHER" id="PTHR36445:SF1">
    <property type="entry name" value="GTP CYCLOHYDROLASE MPTA"/>
    <property type="match status" value="1"/>
</dbReference>
<dbReference type="Pfam" id="PF02649">
    <property type="entry name" value="GCHY-1"/>
    <property type="match status" value="1"/>
</dbReference>
<proteinExistence type="inferred from homology"/>
<comment type="function">
    <text evidence="1">Converts GTP to 7,8-dihydro-D-neopterin 2',3'-cyclic phosphate, the first intermediate in the biosynthesis of coenzyme methanopterin.</text>
</comment>
<comment type="catalytic activity">
    <reaction evidence="1">
        <text>GTP + H2O = 7,8-dihydroneopterin 2',3'-cyclic phosphate + formate + diphosphate + H(+)</text>
        <dbReference type="Rhea" id="RHEA:25860"/>
        <dbReference type="ChEBI" id="CHEBI:15377"/>
        <dbReference type="ChEBI" id="CHEBI:15378"/>
        <dbReference type="ChEBI" id="CHEBI:15740"/>
        <dbReference type="ChEBI" id="CHEBI:33019"/>
        <dbReference type="ChEBI" id="CHEBI:37565"/>
        <dbReference type="ChEBI" id="CHEBI:58854"/>
        <dbReference type="EC" id="3.5.4.39"/>
    </reaction>
</comment>
<comment type="cofactor">
    <cofactor evidence="1">
        <name>Fe(2+)</name>
        <dbReference type="ChEBI" id="CHEBI:29033"/>
    </cofactor>
    <text evidence="1">Binds 1 Fe(2+) ion per subunit.</text>
</comment>
<comment type="pathway">
    <text evidence="1">Cofactor biosynthesis; 5,6,7,8-tetrahydromethanopterin biosynthesis.</text>
</comment>
<comment type="subunit">
    <text evidence="1">Homodimer.</text>
</comment>
<comment type="similarity">
    <text evidence="1">Belongs to the GTP cyclohydrolase IV family.</text>
</comment>
<protein>
    <recommendedName>
        <fullName evidence="1">GTP cyclohydrolase MptA</fullName>
        <ecNumber evidence="1">3.5.4.39</ecNumber>
    </recommendedName>
    <alternativeName>
        <fullName evidence="1">GTP cyclohydrolase IV</fullName>
    </alternativeName>
</protein>
<feature type="chain" id="PRO_1000068667" description="GTP cyclohydrolase MptA">
    <location>
        <begin position="1"/>
        <end position="315"/>
    </location>
</feature>
<feature type="site" description="May be catalytically important" evidence="1">
    <location>
        <position position="161"/>
    </location>
</feature>
<organism>
    <name type="scientific">Methanococcus maripaludis (strain C7 / ATCC BAA-1331)</name>
    <dbReference type="NCBI Taxonomy" id="426368"/>
    <lineage>
        <taxon>Archaea</taxon>
        <taxon>Methanobacteriati</taxon>
        <taxon>Methanobacteriota</taxon>
        <taxon>Methanomada group</taxon>
        <taxon>Methanococci</taxon>
        <taxon>Methanococcales</taxon>
        <taxon>Methanococcaceae</taxon>
        <taxon>Methanococcus</taxon>
    </lineage>
</organism>
<reference key="1">
    <citation type="submission" date="2007-06" db="EMBL/GenBank/DDBJ databases">
        <title>Complete sequence of Methanococcus maripaludis C7.</title>
        <authorList>
            <consortium name="US DOE Joint Genome Institute"/>
            <person name="Copeland A."/>
            <person name="Lucas S."/>
            <person name="Lapidus A."/>
            <person name="Barry K."/>
            <person name="Glavina del Rio T."/>
            <person name="Dalin E."/>
            <person name="Tice H."/>
            <person name="Pitluck S."/>
            <person name="Clum A."/>
            <person name="Schmutz J."/>
            <person name="Larimer F."/>
            <person name="Land M."/>
            <person name="Hauser L."/>
            <person name="Kyrpides N."/>
            <person name="Anderson I."/>
            <person name="Sieprawska-Lupa M."/>
            <person name="Whitman W.B."/>
            <person name="Richardson P."/>
        </authorList>
    </citation>
    <scope>NUCLEOTIDE SEQUENCE [LARGE SCALE GENOMIC DNA]</scope>
    <source>
        <strain>C7 / ATCC BAA-1331</strain>
    </source>
</reference>
<keyword id="KW-0378">Hydrolase</keyword>
<keyword id="KW-0408">Iron</keyword>
<keyword id="KW-0479">Metal-binding</keyword>
<evidence type="ECO:0000255" key="1">
    <source>
        <dbReference type="HAMAP-Rule" id="MF_01527"/>
    </source>
</evidence>
<gene>
    <name evidence="1" type="primary">mptA</name>
    <name type="ordered locus">MmarC7_1031</name>
</gene>